<protein>
    <recommendedName>
        <fullName evidence="1">Small ribosomal subunit protein bS18</fullName>
    </recommendedName>
    <alternativeName>
        <fullName evidence="2">30S ribosomal protein S18</fullName>
    </alternativeName>
</protein>
<accession>Q31P66</accession>
<keyword id="KW-1185">Reference proteome</keyword>
<keyword id="KW-0687">Ribonucleoprotein</keyword>
<keyword id="KW-0689">Ribosomal protein</keyword>
<keyword id="KW-0694">RNA-binding</keyword>
<keyword id="KW-0699">rRNA-binding</keyword>
<proteinExistence type="inferred from homology"/>
<feature type="chain" id="PRO_1000003642" description="Small ribosomal subunit protein bS18">
    <location>
        <begin position="1"/>
        <end position="71"/>
    </location>
</feature>
<organism>
    <name type="scientific">Synechococcus elongatus (strain ATCC 33912 / PCC 7942 / FACHB-805)</name>
    <name type="common">Anacystis nidulans R2</name>
    <dbReference type="NCBI Taxonomy" id="1140"/>
    <lineage>
        <taxon>Bacteria</taxon>
        <taxon>Bacillati</taxon>
        <taxon>Cyanobacteriota</taxon>
        <taxon>Cyanophyceae</taxon>
        <taxon>Synechococcales</taxon>
        <taxon>Synechococcaceae</taxon>
        <taxon>Synechococcus</taxon>
    </lineage>
</organism>
<evidence type="ECO:0000255" key="1">
    <source>
        <dbReference type="HAMAP-Rule" id="MF_00270"/>
    </source>
</evidence>
<evidence type="ECO:0000305" key="2"/>
<dbReference type="EMBL" id="CP000100">
    <property type="protein sequence ID" value="ABB57153.1"/>
    <property type="molecule type" value="Genomic_DNA"/>
</dbReference>
<dbReference type="RefSeq" id="WP_011242738.1">
    <property type="nucleotide sequence ID" value="NZ_JACJTX010000003.1"/>
</dbReference>
<dbReference type="SMR" id="Q31P66"/>
<dbReference type="STRING" id="1140.Synpcc7942_1123"/>
<dbReference type="PaxDb" id="1140-Synpcc7942_1123"/>
<dbReference type="GeneID" id="72429976"/>
<dbReference type="KEGG" id="syf:Synpcc7942_1123"/>
<dbReference type="eggNOG" id="COG0238">
    <property type="taxonomic scope" value="Bacteria"/>
</dbReference>
<dbReference type="HOGENOM" id="CLU_148710_2_3_3"/>
<dbReference type="OrthoDB" id="9812008at2"/>
<dbReference type="BioCyc" id="SYNEL:SYNPCC7942_1123-MONOMER"/>
<dbReference type="Proteomes" id="UP000889800">
    <property type="component" value="Chromosome"/>
</dbReference>
<dbReference type="GO" id="GO:0022627">
    <property type="term" value="C:cytosolic small ribosomal subunit"/>
    <property type="evidence" value="ECO:0007669"/>
    <property type="project" value="TreeGrafter"/>
</dbReference>
<dbReference type="GO" id="GO:0070181">
    <property type="term" value="F:small ribosomal subunit rRNA binding"/>
    <property type="evidence" value="ECO:0007669"/>
    <property type="project" value="TreeGrafter"/>
</dbReference>
<dbReference type="GO" id="GO:0003735">
    <property type="term" value="F:structural constituent of ribosome"/>
    <property type="evidence" value="ECO:0007669"/>
    <property type="project" value="InterPro"/>
</dbReference>
<dbReference type="GO" id="GO:0006412">
    <property type="term" value="P:translation"/>
    <property type="evidence" value="ECO:0007669"/>
    <property type="project" value="UniProtKB-UniRule"/>
</dbReference>
<dbReference type="FunFam" id="4.10.640.10:FF:000002">
    <property type="entry name" value="30S ribosomal protein S18, chloroplastic"/>
    <property type="match status" value="1"/>
</dbReference>
<dbReference type="Gene3D" id="4.10.640.10">
    <property type="entry name" value="Ribosomal protein S18"/>
    <property type="match status" value="1"/>
</dbReference>
<dbReference type="HAMAP" id="MF_00270">
    <property type="entry name" value="Ribosomal_bS18"/>
    <property type="match status" value="1"/>
</dbReference>
<dbReference type="InterPro" id="IPR001648">
    <property type="entry name" value="Ribosomal_bS18"/>
</dbReference>
<dbReference type="InterPro" id="IPR018275">
    <property type="entry name" value="Ribosomal_bS18_CS"/>
</dbReference>
<dbReference type="InterPro" id="IPR036870">
    <property type="entry name" value="Ribosomal_bS18_sf"/>
</dbReference>
<dbReference type="NCBIfam" id="TIGR00165">
    <property type="entry name" value="S18"/>
    <property type="match status" value="1"/>
</dbReference>
<dbReference type="PANTHER" id="PTHR13479">
    <property type="entry name" value="30S RIBOSOMAL PROTEIN S18"/>
    <property type="match status" value="1"/>
</dbReference>
<dbReference type="PANTHER" id="PTHR13479:SF40">
    <property type="entry name" value="SMALL RIBOSOMAL SUBUNIT PROTEIN BS18M"/>
    <property type="match status" value="1"/>
</dbReference>
<dbReference type="Pfam" id="PF01084">
    <property type="entry name" value="Ribosomal_S18"/>
    <property type="match status" value="1"/>
</dbReference>
<dbReference type="PRINTS" id="PR00974">
    <property type="entry name" value="RIBOSOMALS18"/>
</dbReference>
<dbReference type="SUPFAM" id="SSF46911">
    <property type="entry name" value="Ribosomal protein S18"/>
    <property type="match status" value="1"/>
</dbReference>
<dbReference type="PROSITE" id="PS00057">
    <property type="entry name" value="RIBOSOMAL_S18"/>
    <property type="match status" value="1"/>
</dbReference>
<comment type="function">
    <text evidence="1">Binds as a heterodimer with protein bS6 to the central domain of the 16S rRNA, where it helps stabilize the platform of the 30S subunit.</text>
</comment>
<comment type="subunit">
    <text evidence="1">Part of the 30S ribosomal subunit. Forms a tight heterodimer with protein bS6.</text>
</comment>
<comment type="similarity">
    <text evidence="1">Belongs to the bacterial ribosomal protein bS18 family.</text>
</comment>
<gene>
    <name evidence="1" type="primary">rpsR</name>
    <name evidence="1" type="synonym">rps18</name>
    <name type="ordered locus">Synpcc7942_1123</name>
</gene>
<sequence>MSYFRRRLSPIKPSDPIDYKDVDLLRKFITERGKILPRRITGLTARQQRDLAVAIKRARILALLPFLNQEG</sequence>
<name>RS18_SYNE7</name>
<reference key="1">
    <citation type="submission" date="2005-08" db="EMBL/GenBank/DDBJ databases">
        <title>Complete sequence of chromosome 1 of Synechococcus elongatus PCC 7942.</title>
        <authorList>
            <consortium name="US DOE Joint Genome Institute"/>
            <person name="Copeland A."/>
            <person name="Lucas S."/>
            <person name="Lapidus A."/>
            <person name="Barry K."/>
            <person name="Detter J.C."/>
            <person name="Glavina T."/>
            <person name="Hammon N."/>
            <person name="Israni S."/>
            <person name="Pitluck S."/>
            <person name="Schmutz J."/>
            <person name="Larimer F."/>
            <person name="Land M."/>
            <person name="Kyrpides N."/>
            <person name="Lykidis A."/>
            <person name="Golden S."/>
            <person name="Richardson P."/>
        </authorList>
    </citation>
    <scope>NUCLEOTIDE SEQUENCE [LARGE SCALE GENOMIC DNA]</scope>
    <source>
        <strain>ATCC 33912 / PCC 7942 / FACHB-805</strain>
    </source>
</reference>